<evidence type="ECO:0000255" key="1">
    <source>
        <dbReference type="HAMAP-Rule" id="MF_01320"/>
    </source>
</evidence>
<evidence type="ECO:0000256" key="2">
    <source>
        <dbReference type="SAM" id="MobiDB-lite"/>
    </source>
</evidence>
<evidence type="ECO:0000305" key="3"/>
<dbReference type="EMBL" id="AE017243">
    <property type="protein sequence ID" value="AAZ44278.1"/>
    <property type="molecule type" value="Genomic_DNA"/>
</dbReference>
<dbReference type="RefSeq" id="WP_011283973.1">
    <property type="nucleotide sequence ID" value="NC_007295.1"/>
</dbReference>
<dbReference type="SMR" id="Q4AAE3"/>
<dbReference type="GeneID" id="41334490"/>
<dbReference type="KEGG" id="mhj:MHJ_0187"/>
<dbReference type="eggNOG" id="COG0090">
    <property type="taxonomic scope" value="Bacteria"/>
</dbReference>
<dbReference type="HOGENOM" id="CLU_036235_2_1_14"/>
<dbReference type="OrthoDB" id="9778722at2"/>
<dbReference type="Proteomes" id="UP000000548">
    <property type="component" value="Chromosome"/>
</dbReference>
<dbReference type="GO" id="GO:0015934">
    <property type="term" value="C:large ribosomal subunit"/>
    <property type="evidence" value="ECO:0007669"/>
    <property type="project" value="InterPro"/>
</dbReference>
<dbReference type="GO" id="GO:0019843">
    <property type="term" value="F:rRNA binding"/>
    <property type="evidence" value="ECO:0007669"/>
    <property type="project" value="UniProtKB-UniRule"/>
</dbReference>
<dbReference type="GO" id="GO:0003735">
    <property type="term" value="F:structural constituent of ribosome"/>
    <property type="evidence" value="ECO:0007669"/>
    <property type="project" value="InterPro"/>
</dbReference>
<dbReference type="GO" id="GO:0016740">
    <property type="term" value="F:transferase activity"/>
    <property type="evidence" value="ECO:0007669"/>
    <property type="project" value="InterPro"/>
</dbReference>
<dbReference type="GO" id="GO:0002181">
    <property type="term" value="P:cytoplasmic translation"/>
    <property type="evidence" value="ECO:0007669"/>
    <property type="project" value="TreeGrafter"/>
</dbReference>
<dbReference type="FunFam" id="2.30.30.30:FF:000001">
    <property type="entry name" value="50S ribosomal protein L2"/>
    <property type="match status" value="1"/>
</dbReference>
<dbReference type="FunFam" id="2.40.50.140:FF:000003">
    <property type="entry name" value="50S ribosomal protein L2"/>
    <property type="match status" value="1"/>
</dbReference>
<dbReference type="FunFam" id="4.10.950.10:FF:000001">
    <property type="entry name" value="50S ribosomal protein L2"/>
    <property type="match status" value="1"/>
</dbReference>
<dbReference type="Gene3D" id="2.30.30.30">
    <property type="match status" value="1"/>
</dbReference>
<dbReference type="Gene3D" id="2.40.50.140">
    <property type="entry name" value="Nucleic acid-binding proteins"/>
    <property type="match status" value="1"/>
</dbReference>
<dbReference type="Gene3D" id="4.10.950.10">
    <property type="entry name" value="Ribosomal protein L2, domain 3"/>
    <property type="match status" value="1"/>
</dbReference>
<dbReference type="HAMAP" id="MF_01320_B">
    <property type="entry name" value="Ribosomal_uL2_B"/>
    <property type="match status" value="1"/>
</dbReference>
<dbReference type="InterPro" id="IPR012340">
    <property type="entry name" value="NA-bd_OB-fold"/>
</dbReference>
<dbReference type="InterPro" id="IPR014722">
    <property type="entry name" value="Rib_uL2_dom2"/>
</dbReference>
<dbReference type="InterPro" id="IPR002171">
    <property type="entry name" value="Ribosomal_uL2"/>
</dbReference>
<dbReference type="InterPro" id="IPR005880">
    <property type="entry name" value="Ribosomal_uL2_bac/org-type"/>
</dbReference>
<dbReference type="InterPro" id="IPR022669">
    <property type="entry name" value="Ribosomal_uL2_C"/>
</dbReference>
<dbReference type="InterPro" id="IPR022671">
    <property type="entry name" value="Ribosomal_uL2_CS"/>
</dbReference>
<dbReference type="InterPro" id="IPR014726">
    <property type="entry name" value="Ribosomal_uL2_dom3"/>
</dbReference>
<dbReference type="InterPro" id="IPR022666">
    <property type="entry name" value="Ribosomal_uL2_RNA-bd_dom"/>
</dbReference>
<dbReference type="InterPro" id="IPR008991">
    <property type="entry name" value="Translation_prot_SH3-like_sf"/>
</dbReference>
<dbReference type="NCBIfam" id="TIGR01171">
    <property type="entry name" value="rplB_bact"/>
    <property type="match status" value="1"/>
</dbReference>
<dbReference type="PANTHER" id="PTHR13691:SF5">
    <property type="entry name" value="LARGE RIBOSOMAL SUBUNIT PROTEIN UL2M"/>
    <property type="match status" value="1"/>
</dbReference>
<dbReference type="PANTHER" id="PTHR13691">
    <property type="entry name" value="RIBOSOMAL PROTEIN L2"/>
    <property type="match status" value="1"/>
</dbReference>
<dbReference type="Pfam" id="PF00181">
    <property type="entry name" value="Ribosomal_L2"/>
    <property type="match status" value="1"/>
</dbReference>
<dbReference type="Pfam" id="PF03947">
    <property type="entry name" value="Ribosomal_L2_C"/>
    <property type="match status" value="1"/>
</dbReference>
<dbReference type="PIRSF" id="PIRSF002158">
    <property type="entry name" value="Ribosomal_L2"/>
    <property type="match status" value="1"/>
</dbReference>
<dbReference type="SMART" id="SM01383">
    <property type="entry name" value="Ribosomal_L2"/>
    <property type="match status" value="1"/>
</dbReference>
<dbReference type="SMART" id="SM01382">
    <property type="entry name" value="Ribosomal_L2_C"/>
    <property type="match status" value="1"/>
</dbReference>
<dbReference type="SUPFAM" id="SSF50249">
    <property type="entry name" value="Nucleic acid-binding proteins"/>
    <property type="match status" value="1"/>
</dbReference>
<dbReference type="SUPFAM" id="SSF50104">
    <property type="entry name" value="Translation proteins SH3-like domain"/>
    <property type="match status" value="1"/>
</dbReference>
<dbReference type="PROSITE" id="PS00467">
    <property type="entry name" value="RIBOSOMAL_L2"/>
    <property type="match status" value="1"/>
</dbReference>
<keyword id="KW-0687">Ribonucleoprotein</keyword>
<keyword id="KW-0689">Ribosomal protein</keyword>
<keyword id="KW-0694">RNA-binding</keyword>
<keyword id="KW-0699">rRNA-binding</keyword>
<feature type="chain" id="PRO_0000237210" description="Large ribosomal subunit protein uL2">
    <location>
        <begin position="1"/>
        <end position="282"/>
    </location>
</feature>
<feature type="region of interest" description="Disordered" evidence="2">
    <location>
        <begin position="215"/>
        <end position="282"/>
    </location>
</feature>
<feature type="compositionally biased region" description="Basic residues" evidence="2">
    <location>
        <begin position="263"/>
        <end position="282"/>
    </location>
</feature>
<accession>Q4AAE3</accession>
<proteinExistence type="inferred from homology"/>
<sequence length="282" mass="31199">MALKYYKPTTNGRRHMSSLDFGANLTTNKPEKSLLTILKKHSGRNSQGKITVRHQGGRHKRKYRLIDFKRNKDDITGIVKTIEYDPNRSANIALISYIDGEKRYILAPKNLKVGQKISSGPKSDILVGNALPLAKIPEGTFVHNIELKPGAGAKLIRSAGTWAQIQGRDENGKYVILKLKSGEYRRILATCRATIGVVGNEENSLVNIGKAGRNRHKGIRPTVRGSVMNPNDHPHGGGEGKQPIGRKSPLTPWGKKALGVKTRNPKKPSTKLIIRSRKETKK</sequence>
<comment type="function">
    <text evidence="1">One of the primary rRNA binding proteins. Required for association of the 30S and 50S subunits to form the 70S ribosome, for tRNA binding and peptide bond formation. It has been suggested to have peptidyltransferase activity; this is somewhat controversial. Makes several contacts with the 16S rRNA in the 70S ribosome.</text>
</comment>
<comment type="subunit">
    <text evidence="1">Part of the 50S ribosomal subunit. Forms a bridge to the 30S subunit in the 70S ribosome.</text>
</comment>
<comment type="similarity">
    <text evidence="1">Belongs to the universal ribosomal protein uL2 family.</text>
</comment>
<gene>
    <name evidence="1" type="primary">rplB</name>
    <name type="ordered locus">MHJ_0187</name>
</gene>
<reference key="1">
    <citation type="journal article" date="2005" name="J. Bacteriol.">
        <title>Swine and poultry pathogens: the complete genome sequences of two strains of Mycoplasma hyopneumoniae and a strain of Mycoplasma synoviae.</title>
        <authorList>
            <person name="Vasconcelos A.T.R."/>
            <person name="Ferreira H.B."/>
            <person name="Bizarro C.V."/>
            <person name="Bonatto S.L."/>
            <person name="Carvalho M.O."/>
            <person name="Pinto P.M."/>
            <person name="Almeida D.F."/>
            <person name="Almeida L.G.P."/>
            <person name="Almeida R."/>
            <person name="Alves-Junior L."/>
            <person name="Assuncao E.N."/>
            <person name="Azevedo V.A.C."/>
            <person name="Bogo M.R."/>
            <person name="Brigido M.M."/>
            <person name="Brocchi M."/>
            <person name="Burity H.A."/>
            <person name="Camargo A.A."/>
            <person name="Camargo S.S."/>
            <person name="Carepo M.S."/>
            <person name="Carraro D.M."/>
            <person name="de Mattos Cascardo J.C."/>
            <person name="Castro L.A."/>
            <person name="Cavalcanti G."/>
            <person name="Chemale G."/>
            <person name="Collevatti R.G."/>
            <person name="Cunha C.W."/>
            <person name="Dallagiovanna B."/>
            <person name="Dambros B.P."/>
            <person name="Dellagostin O.A."/>
            <person name="Falcao C."/>
            <person name="Fantinatti-Garboggini F."/>
            <person name="Felipe M.S.S."/>
            <person name="Fiorentin L."/>
            <person name="Franco G.R."/>
            <person name="Freitas N.S.A."/>
            <person name="Frias D."/>
            <person name="Grangeiro T.B."/>
            <person name="Grisard E.C."/>
            <person name="Guimaraes C.T."/>
            <person name="Hungria M."/>
            <person name="Jardim S.N."/>
            <person name="Krieger M.A."/>
            <person name="Laurino J.P."/>
            <person name="Lima L.F.A."/>
            <person name="Lopes M.I."/>
            <person name="Loreto E.L.S."/>
            <person name="Madeira H.M.F."/>
            <person name="Manfio G.P."/>
            <person name="Maranhao A.Q."/>
            <person name="Martinkovics C.T."/>
            <person name="Medeiros S.R.B."/>
            <person name="Moreira M.A.M."/>
            <person name="Neiva M."/>
            <person name="Ramalho-Neto C.E."/>
            <person name="Nicolas M.F."/>
            <person name="Oliveira S.C."/>
            <person name="Paixao R.F.C."/>
            <person name="Pedrosa F.O."/>
            <person name="Pena S.D.J."/>
            <person name="Pereira M."/>
            <person name="Pereira-Ferrari L."/>
            <person name="Piffer I."/>
            <person name="Pinto L.S."/>
            <person name="Potrich D.P."/>
            <person name="Salim A.C.M."/>
            <person name="Santos F.R."/>
            <person name="Schmitt R."/>
            <person name="Schneider M.P.C."/>
            <person name="Schrank A."/>
            <person name="Schrank I.S."/>
            <person name="Schuck A.F."/>
            <person name="Seuanez H.N."/>
            <person name="Silva D.W."/>
            <person name="Silva R."/>
            <person name="Silva S.C."/>
            <person name="Soares C.M.A."/>
            <person name="Souza K.R.L."/>
            <person name="Souza R.C."/>
            <person name="Staats C.C."/>
            <person name="Steffens M.B.R."/>
            <person name="Teixeira S.M.R."/>
            <person name="Urmenyi T.P."/>
            <person name="Vainstein M.H."/>
            <person name="Zuccherato L.W."/>
            <person name="Simpson A.J.G."/>
            <person name="Zaha A."/>
        </authorList>
    </citation>
    <scope>NUCLEOTIDE SEQUENCE [LARGE SCALE GENOMIC DNA]</scope>
    <source>
        <strain>J / ATCC 25934 / NCTC 10110</strain>
    </source>
</reference>
<name>RL2_MESHJ</name>
<organism>
    <name type="scientific">Mesomycoplasma hyopneumoniae (strain J / ATCC 25934 / NCTC 10110)</name>
    <name type="common">Mycoplasma hyopneumoniae</name>
    <dbReference type="NCBI Taxonomy" id="262719"/>
    <lineage>
        <taxon>Bacteria</taxon>
        <taxon>Bacillati</taxon>
        <taxon>Mycoplasmatota</taxon>
        <taxon>Mycoplasmoidales</taxon>
        <taxon>Metamycoplasmataceae</taxon>
        <taxon>Mesomycoplasma</taxon>
    </lineage>
</organism>
<protein>
    <recommendedName>
        <fullName evidence="1">Large ribosomal subunit protein uL2</fullName>
    </recommendedName>
    <alternativeName>
        <fullName evidence="3">50S ribosomal protein L2</fullName>
    </alternativeName>
</protein>